<gene>
    <name type="primary">pknH</name>
    <name type="ordered locus">MT1304</name>
</gene>
<organism>
    <name type="scientific">Mycobacterium tuberculosis (strain CDC 1551 / Oshkosh)</name>
    <dbReference type="NCBI Taxonomy" id="83331"/>
    <lineage>
        <taxon>Bacteria</taxon>
        <taxon>Bacillati</taxon>
        <taxon>Actinomycetota</taxon>
        <taxon>Actinomycetes</taxon>
        <taxon>Mycobacteriales</taxon>
        <taxon>Mycobacteriaceae</taxon>
        <taxon>Mycobacterium</taxon>
        <taxon>Mycobacterium tuberculosis complex</taxon>
    </lineage>
</organism>
<accession>P9WI70</accession>
<accession>L0T6C9</accession>
<accession>Q11053</accession>
<reference key="1">
    <citation type="journal article" date="2002" name="J. Bacteriol.">
        <title>Whole-genome comparison of Mycobacterium tuberculosis clinical and laboratory strains.</title>
        <authorList>
            <person name="Fleischmann R.D."/>
            <person name="Alland D."/>
            <person name="Eisen J.A."/>
            <person name="Carpenter L."/>
            <person name="White O."/>
            <person name="Peterson J.D."/>
            <person name="DeBoy R.T."/>
            <person name="Dodson R.J."/>
            <person name="Gwinn M.L."/>
            <person name="Haft D.H."/>
            <person name="Hickey E.K."/>
            <person name="Kolonay J.F."/>
            <person name="Nelson W.C."/>
            <person name="Umayam L.A."/>
            <person name="Ermolaeva M.D."/>
            <person name="Salzberg S.L."/>
            <person name="Delcher A."/>
            <person name="Utterback T.R."/>
            <person name="Weidman J.F."/>
            <person name="Khouri H.M."/>
            <person name="Gill J."/>
            <person name="Mikula A."/>
            <person name="Bishai W."/>
            <person name="Jacobs W.R. Jr."/>
            <person name="Venter J.C."/>
            <person name="Fraser C.M."/>
        </authorList>
    </citation>
    <scope>NUCLEOTIDE SEQUENCE [LARGE SCALE GENOMIC DNA]</scope>
    <source>
        <strain>CDC 1551 / Oshkosh</strain>
    </source>
</reference>
<protein>
    <recommendedName>
        <fullName>Serine/threonine-protein kinase PknH</fullName>
        <ecNumber>2.7.11.1</ecNumber>
    </recommendedName>
</protein>
<comment type="function">
    <text evidence="1">May regulate bacterial growth in response to external signals to facilitate adaptation to the host environment.</text>
</comment>
<comment type="catalytic activity">
    <reaction>
        <text>L-seryl-[protein] + ATP = O-phospho-L-seryl-[protein] + ADP + H(+)</text>
        <dbReference type="Rhea" id="RHEA:17989"/>
        <dbReference type="Rhea" id="RHEA-COMP:9863"/>
        <dbReference type="Rhea" id="RHEA-COMP:11604"/>
        <dbReference type="ChEBI" id="CHEBI:15378"/>
        <dbReference type="ChEBI" id="CHEBI:29999"/>
        <dbReference type="ChEBI" id="CHEBI:30616"/>
        <dbReference type="ChEBI" id="CHEBI:83421"/>
        <dbReference type="ChEBI" id="CHEBI:456216"/>
        <dbReference type="EC" id="2.7.11.1"/>
    </reaction>
</comment>
<comment type="catalytic activity">
    <reaction>
        <text>L-threonyl-[protein] + ATP = O-phospho-L-threonyl-[protein] + ADP + H(+)</text>
        <dbReference type="Rhea" id="RHEA:46608"/>
        <dbReference type="Rhea" id="RHEA-COMP:11060"/>
        <dbReference type="Rhea" id="RHEA-COMP:11605"/>
        <dbReference type="ChEBI" id="CHEBI:15378"/>
        <dbReference type="ChEBI" id="CHEBI:30013"/>
        <dbReference type="ChEBI" id="CHEBI:30616"/>
        <dbReference type="ChEBI" id="CHEBI:61977"/>
        <dbReference type="ChEBI" id="CHEBI:456216"/>
        <dbReference type="EC" id="2.7.11.1"/>
    </reaction>
</comment>
<comment type="cofactor">
    <cofactor evidence="1">
        <name>a divalent metal cation</name>
        <dbReference type="ChEBI" id="CHEBI:60240"/>
    </cofactor>
</comment>
<comment type="subcellular location">
    <subcellularLocation>
        <location evidence="1">Cell membrane</location>
        <topology evidence="1">Single-pass membrane protein</topology>
    </subcellularLocation>
</comment>
<comment type="PTM">
    <text evidence="1">Autophosphorylated on threonine and serine residues. Dephosphorylated by PstP (By similarity).</text>
</comment>
<comment type="similarity">
    <text evidence="3">Belongs to the protein kinase superfamily. Ser/Thr protein kinase family.</text>
</comment>
<proteinExistence type="inferred from homology"/>
<evidence type="ECO:0000250" key="1"/>
<evidence type="ECO:0000255" key="2"/>
<evidence type="ECO:0000255" key="3">
    <source>
        <dbReference type="PROSITE-ProRule" id="PRU00159"/>
    </source>
</evidence>
<evidence type="ECO:0000255" key="4">
    <source>
        <dbReference type="PROSITE-ProRule" id="PRU10027"/>
    </source>
</evidence>
<evidence type="ECO:0000256" key="5">
    <source>
        <dbReference type="SAM" id="MobiDB-lite"/>
    </source>
</evidence>
<evidence type="ECO:0000305" key="6"/>
<sequence length="626" mass="66726">MSDAQDSRVGSMFGPYHLKRLLGRGGMGEVYEAEHTVKEWTVAVKLMTAEFSKDPVFRERMKREARIAGRLQEPHVVPIHDYGEVDGQMFLEMRLVEGTDLDSVLKRFGPLTPPRAVAIITQIASALDAAHADGVMHRDVKPQNILITRDDFAYLVDFGIASATTDEKLTQLGTAVGTWKYMAPERFSNDEVTYRADIYALACVLHECLTGAPPYRADSAGTLVSSHLMGPIPQPSAIRPGIPKAFDAVVARGMAKKPEDRYASAGDLALAAHEALSDPDQDHAADILRRSQESTLPAPPKPVPPPTMPATAMAPRQPPAPPVTPPGVQPAPKPSYTPPAQPGPAGQRPGPTGQPSWAPNSGPMPASGPTPTPQYYQGGGWGAPPSGGPSPWAQTPRKTNPWPLVAGAAAVVLVLVLGAIGIWIAIRPKPVQPPQPVAEERLSALLLNSSEVNAVMGSSSMQPGKPITSMDSSPVTVSLPDCQGALYTSQDPVYAGTGYTAINGLISSEPGDNYEHWVNQAVVAFPTADKARAFVQTSADKWKNCAGKTVTVTNKAKTYRWTFADVKGSPPTITVIDTQEGAEGWECQRAMSVANNVVVDVNACGYQITNQAGQIAAKIVDKVNKE</sequence>
<feature type="chain" id="PRO_0000428058" description="Serine/threonine-protein kinase PknH">
    <location>
        <begin position="1"/>
        <end position="626"/>
    </location>
</feature>
<feature type="topological domain" description="Cytoplasmic" evidence="2">
    <location>
        <begin position="1"/>
        <end position="403"/>
    </location>
</feature>
<feature type="transmembrane region" description="Helical" evidence="2">
    <location>
        <begin position="404"/>
        <end position="424"/>
    </location>
</feature>
<feature type="topological domain" description="Extracellular" evidence="2">
    <location>
        <begin position="425"/>
        <end position="626"/>
    </location>
</feature>
<feature type="domain" description="Protein kinase" evidence="3">
    <location>
        <begin position="16"/>
        <end position="276"/>
    </location>
</feature>
<feature type="region of interest" description="Disordered" evidence="5">
    <location>
        <begin position="292"/>
        <end position="396"/>
    </location>
</feature>
<feature type="compositionally biased region" description="Pro residues" evidence="5">
    <location>
        <begin position="297"/>
        <end position="308"/>
    </location>
</feature>
<feature type="compositionally biased region" description="Pro residues" evidence="5">
    <location>
        <begin position="316"/>
        <end position="342"/>
    </location>
</feature>
<feature type="compositionally biased region" description="Low complexity" evidence="5">
    <location>
        <begin position="343"/>
        <end position="355"/>
    </location>
</feature>
<feature type="active site" description="Proton acceptor" evidence="3 4">
    <location>
        <position position="139"/>
    </location>
</feature>
<feature type="binding site" evidence="3">
    <location>
        <begin position="22"/>
        <end position="30"/>
    </location>
    <ligand>
        <name>ATP</name>
        <dbReference type="ChEBI" id="CHEBI:30616"/>
    </ligand>
</feature>
<feature type="binding site" evidence="3">
    <location>
        <position position="45"/>
    </location>
    <ligand>
        <name>ATP</name>
        <dbReference type="ChEBI" id="CHEBI:30616"/>
    </ligand>
</feature>
<feature type="modified residue" description="Phosphothreonine" evidence="6">
    <location>
        <position position="170"/>
    </location>
</feature>
<feature type="disulfide bond" evidence="1">
    <location>
        <begin position="482"/>
        <end position="545"/>
    </location>
</feature>
<feature type="disulfide bond" evidence="1">
    <location>
        <begin position="587"/>
        <end position="604"/>
    </location>
</feature>
<name>PKNH_MYCTO</name>
<dbReference type="EC" id="2.7.11.1"/>
<dbReference type="EMBL" id="AE000516">
    <property type="protein sequence ID" value="AAK45563.1"/>
    <property type="molecule type" value="Genomic_DNA"/>
</dbReference>
<dbReference type="PIR" id="B70754">
    <property type="entry name" value="B70754"/>
</dbReference>
<dbReference type="RefSeq" id="WP_003898799.1">
    <property type="nucleotide sequence ID" value="NZ_KK341227.1"/>
</dbReference>
<dbReference type="SMR" id="P9WI70"/>
<dbReference type="KEGG" id="mtc:MT1304"/>
<dbReference type="PATRIC" id="fig|83331.31.peg.1409"/>
<dbReference type="HOGENOM" id="CLU_000288_63_44_11"/>
<dbReference type="Proteomes" id="UP000001020">
    <property type="component" value="Chromosome"/>
</dbReference>
<dbReference type="GO" id="GO:0005886">
    <property type="term" value="C:plasma membrane"/>
    <property type="evidence" value="ECO:0007669"/>
    <property type="project" value="UniProtKB-SubCell"/>
</dbReference>
<dbReference type="GO" id="GO:0005524">
    <property type="term" value="F:ATP binding"/>
    <property type="evidence" value="ECO:0007669"/>
    <property type="project" value="UniProtKB-KW"/>
</dbReference>
<dbReference type="GO" id="GO:0106310">
    <property type="term" value="F:protein serine kinase activity"/>
    <property type="evidence" value="ECO:0007669"/>
    <property type="project" value="RHEA"/>
</dbReference>
<dbReference type="GO" id="GO:0004674">
    <property type="term" value="F:protein serine/threonine kinase activity"/>
    <property type="evidence" value="ECO:0007669"/>
    <property type="project" value="UniProtKB-KW"/>
</dbReference>
<dbReference type="GO" id="GO:0080090">
    <property type="term" value="P:regulation of primary metabolic process"/>
    <property type="evidence" value="ECO:0007669"/>
    <property type="project" value="UniProtKB-ARBA"/>
</dbReference>
<dbReference type="CDD" id="cd14014">
    <property type="entry name" value="STKc_PknB_like"/>
    <property type="match status" value="1"/>
</dbReference>
<dbReference type="FunFam" id="1.10.510.10:FF:000021">
    <property type="entry name" value="Serine/threonine protein kinase"/>
    <property type="match status" value="1"/>
</dbReference>
<dbReference type="FunFam" id="3.30.200.20:FF:000348">
    <property type="entry name" value="Serine/threonine protein kinase"/>
    <property type="match status" value="1"/>
</dbReference>
<dbReference type="Gene3D" id="3.30.200.20">
    <property type="entry name" value="Phosphorylase Kinase, domain 1"/>
    <property type="match status" value="1"/>
</dbReference>
<dbReference type="Gene3D" id="3.40.1000.70">
    <property type="entry name" value="PknH-like extracellular domain"/>
    <property type="match status" value="1"/>
</dbReference>
<dbReference type="Gene3D" id="1.10.510.10">
    <property type="entry name" value="Transferase(Phosphotransferase) domain 1"/>
    <property type="match status" value="1"/>
</dbReference>
<dbReference type="InterPro" id="IPR011009">
    <property type="entry name" value="Kinase-like_dom_sf"/>
</dbReference>
<dbReference type="InterPro" id="IPR026954">
    <property type="entry name" value="PknH-like_Extracell"/>
</dbReference>
<dbReference type="InterPro" id="IPR038232">
    <property type="entry name" value="PknH-like_Extracell_sf"/>
</dbReference>
<dbReference type="InterPro" id="IPR000719">
    <property type="entry name" value="Prot_kinase_dom"/>
</dbReference>
<dbReference type="InterPro" id="IPR017441">
    <property type="entry name" value="Protein_kinase_ATP_BS"/>
</dbReference>
<dbReference type="InterPro" id="IPR008271">
    <property type="entry name" value="Ser/Thr_kinase_AS"/>
</dbReference>
<dbReference type="PANTHER" id="PTHR43289">
    <property type="entry name" value="MITOGEN-ACTIVATED PROTEIN KINASE KINASE KINASE 20-RELATED"/>
    <property type="match status" value="1"/>
</dbReference>
<dbReference type="PANTHER" id="PTHR43289:SF6">
    <property type="entry name" value="SERINE_THREONINE-PROTEIN KINASE NEKL-3"/>
    <property type="match status" value="1"/>
</dbReference>
<dbReference type="Pfam" id="PF00069">
    <property type="entry name" value="Pkinase"/>
    <property type="match status" value="1"/>
</dbReference>
<dbReference type="Pfam" id="PF14032">
    <property type="entry name" value="PknH_C"/>
    <property type="match status" value="1"/>
</dbReference>
<dbReference type="SMART" id="SM00220">
    <property type="entry name" value="S_TKc"/>
    <property type="match status" value="1"/>
</dbReference>
<dbReference type="SUPFAM" id="SSF56112">
    <property type="entry name" value="Protein kinase-like (PK-like)"/>
    <property type="match status" value="1"/>
</dbReference>
<dbReference type="PROSITE" id="PS00107">
    <property type="entry name" value="PROTEIN_KINASE_ATP"/>
    <property type="match status" value="1"/>
</dbReference>
<dbReference type="PROSITE" id="PS50011">
    <property type="entry name" value="PROTEIN_KINASE_DOM"/>
    <property type="match status" value="1"/>
</dbReference>
<dbReference type="PROSITE" id="PS00108">
    <property type="entry name" value="PROTEIN_KINASE_ST"/>
    <property type="match status" value="1"/>
</dbReference>
<keyword id="KW-0067">ATP-binding</keyword>
<keyword id="KW-1003">Cell membrane</keyword>
<keyword id="KW-1015">Disulfide bond</keyword>
<keyword id="KW-0418">Kinase</keyword>
<keyword id="KW-0472">Membrane</keyword>
<keyword id="KW-0547">Nucleotide-binding</keyword>
<keyword id="KW-0597">Phosphoprotein</keyword>
<keyword id="KW-1185">Reference proteome</keyword>
<keyword id="KW-0723">Serine/threonine-protein kinase</keyword>
<keyword id="KW-0346">Stress response</keyword>
<keyword id="KW-0808">Transferase</keyword>
<keyword id="KW-0812">Transmembrane</keyword>
<keyword id="KW-1133">Transmembrane helix</keyword>